<accession>Q7V2S9</accession>
<reference key="1">
    <citation type="journal article" date="2003" name="Nature">
        <title>Genome divergence in two Prochlorococcus ecotypes reflects oceanic niche differentiation.</title>
        <authorList>
            <person name="Rocap G."/>
            <person name="Larimer F.W."/>
            <person name="Lamerdin J.E."/>
            <person name="Malfatti S."/>
            <person name="Chain P."/>
            <person name="Ahlgren N.A."/>
            <person name="Arellano A."/>
            <person name="Coleman M."/>
            <person name="Hauser L."/>
            <person name="Hess W.R."/>
            <person name="Johnson Z.I."/>
            <person name="Land M.L."/>
            <person name="Lindell D."/>
            <person name="Post A.F."/>
            <person name="Regala W."/>
            <person name="Shah M."/>
            <person name="Shaw S.L."/>
            <person name="Steglich C."/>
            <person name="Sullivan M.B."/>
            <person name="Ting C.S."/>
            <person name="Tolonen A."/>
            <person name="Webb E.A."/>
            <person name="Zinser E.R."/>
            <person name="Chisholm S.W."/>
        </authorList>
    </citation>
    <scope>NUCLEOTIDE SEQUENCE [LARGE SCALE GENOMIC DNA]</scope>
    <source>
        <strain>CCMP1986 / NIES-2087 / MED4</strain>
    </source>
</reference>
<name>AROQ_PROMP</name>
<gene>
    <name evidence="1" type="primary">aroQ</name>
    <name type="synonym">aroD</name>
    <name type="ordered locus">PMM0387</name>
</gene>
<comment type="function">
    <text evidence="1">Catalyzes a trans-dehydration via an enolate intermediate.</text>
</comment>
<comment type="catalytic activity">
    <reaction evidence="1">
        <text>3-dehydroquinate = 3-dehydroshikimate + H2O</text>
        <dbReference type="Rhea" id="RHEA:21096"/>
        <dbReference type="ChEBI" id="CHEBI:15377"/>
        <dbReference type="ChEBI" id="CHEBI:16630"/>
        <dbReference type="ChEBI" id="CHEBI:32364"/>
        <dbReference type="EC" id="4.2.1.10"/>
    </reaction>
</comment>
<comment type="pathway">
    <text evidence="1">Metabolic intermediate biosynthesis; chorismate biosynthesis; chorismate from D-erythrose 4-phosphate and phosphoenolpyruvate: step 3/7.</text>
</comment>
<comment type="subunit">
    <text evidence="1">Homododecamer.</text>
</comment>
<comment type="similarity">
    <text evidence="1">Belongs to the type-II 3-dehydroquinase family.</text>
</comment>
<evidence type="ECO:0000255" key="1">
    <source>
        <dbReference type="HAMAP-Rule" id="MF_00169"/>
    </source>
</evidence>
<sequence length="146" mass="16128">MNILLINGPNLNLLGTREPEIYGNKTLNDIEKDLNKVAKEKSINLECFQSNHEGEIVDKIQSSVSSISGILINAGAFTHTSISIRDALIGSKIPFVELHISNIFSREEFRKESFLTDKAIGIISGFGITSYFLALEGIIEFLSINN</sequence>
<dbReference type="EC" id="4.2.1.10" evidence="1"/>
<dbReference type="EMBL" id="BX548174">
    <property type="protein sequence ID" value="CAE18846.1"/>
    <property type="molecule type" value="Genomic_DNA"/>
</dbReference>
<dbReference type="RefSeq" id="WP_011132023.1">
    <property type="nucleotide sequence ID" value="NC_005072.1"/>
</dbReference>
<dbReference type="SMR" id="Q7V2S9"/>
<dbReference type="STRING" id="59919.PMM0387"/>
<dbReference type="KEGG" id="pmm:PMM0387"/>
<dbReference type="eggNOG" id="COG0757">
    <property type="taxonomic scope" value="Bacteria"/>
</dbReference>
<dbReference type="HOGENOM" id="CLU_090968_1_0_3"/>
<dbReference type="OrthoDB" id="9790793at2"/>
<dbReference type="UniPathway" id="UPA00053">
    <property type="reaction ID" value="UER00086"/>
</dbReference>
<dbReference type="Proteomes" id="UP000001026">
    <property type="component" value="Chromosome"/>
</dbReference>
<dbReference type="GO" id="GO:0003855">
    <property type="term" value="F:3-dehydroquinate dehydratase activity"/>
    <property type="evidence" value="ECO:0007669"/>
    <property type="project" value="UniProtKB-UniRule"/>
</dbReference>
<dbReference type="GO" id="GO:0008652">
    <property type="term" value="P:amino acid biosynthetic process"/>
    <property type="evidence" value="ECO:0007669"/>
    <property type="project" value="UniProtKB-KW"/>
</dbReference>
<dbReference type="GO" id="GO:0009073">
    <property type="term" value="P:aromatic amino acid family biosynthetic process"/>
    <property type="evidence" value="ECO:0007669"/>
    <property type="project" value="UniProtKB-KW"/>
</dbReference>
<dbReference type="GO" id="GO:0009423">
    <property type="term" value="P:chorismate biosynthetic process"/>
    <property type="evidence" value="ECO:0007669"/>
    <property type="project" value="UniProtKB-UniRule"/>
</dbReference>
<dbReference type="GO" id="GO:0019631">
    <property type="term" value="P:quinate catabolic process"/>
    <property type="evidence" value="ECO:0007669"/>
    <property type="project" value="TreeGrafter"/>
</dbReference>
<dbReference type="CDD" id="cd00466">
    <property type="entry name" value="DHQase_II"/>
    <property type="match status" value="1"/>
</dbReference>
<dbReference type="Gene3D" id="3.40.50.9100">
    <property type="entry name" value="Dehydroquinase, class II"/>
    <property type="match status" value="1"/>
</dbReference>
<dbReference type="HAMAP" id="MF_00169">
    <property type="entry name" value="AroQ"/>
    <property type="match status" value="1"/>
</dbReference>
<dbReference type="InterPro" id="IPR001874">
    <property type="entry name" value="DHquinase_II"/>
</dbReference>
<dbReference type="InterPro" id="IPR018509">
    <property type="entry name" value="DHquinase_II_CS"/>
</dbReference>
<dbReference type="InterPro" id="IPR036441">
    <property type="entry name" value="DHquinase_II_sf"/>
</dbReference>
<dbReference type="NCBIfam" id="TIGR01088">
    <property type="entry name" value="aroQ"/>
    <property type="match status" value="1"/>
</dbReference>
<dbReference type="NCBIfam" id="NF003804">
    <property type="entry name" value="PRK05395.1-1"/>
    <property type="match status" value="1"/>
</dbReference>
<dbReference type="NCBIfam" id="NF003805">
    <property type="entry name" value="PRK05395.1-2"/>
    <property type="match status" value="1"/>
</dbReference>
<dbReference type="NCBIfam" id="NF003806">
    <property type="entry name" value="PRK05395.1-3"/>
    <property type="match status" value="1"/>
</dbReference>
<dbReference type="NCBIfam" id="NF003807">
    <property type="entry name" value="PRK05395.1-4"/>
    <property type="match status" value="1"/>
</dbReference>
<dbReference type="PANTHER" id="PTHR21272">
    <property type="entry name" value="CATABOLIC 3-DEHYDROQUINASE"/>
    <property type="match status" value="1"/>
</dbReference>
<dbReference type="PANTHER" id="PTHR21272:SF3">
    <property type="entry name" value="CATABOLIC 3-DEHYDROQUINASE"/>
    <property type="match status" value="1"/>
</dbReference>
<dbReference type="Pfam" id="PF01220">
    <property type="entry name" value="DHquinase_II"/>
    <property type="match status" value="1"/>
</dbReference>
<dbReference type="PIRSF" id="PIRSF001399">
    <property type="entry name" value="DHquinase_II"/>
    <property type="match status" value="1"/>
</dbReference>
<dbReference type="SUPFAM" id="SSF52304">
    <property type="entry name" value="Type II 3-dehydroquinate dehydratase"/>
    <property type="match status" value="1"/>
</dbReference>
<dbReference type="PROSITE" id="PS01029">
    <property type="entry name" value="DEHYDROQUINASE_II"/>
    <property type="match status" value="1"/>
</dbReference>
<organism>
    <name type="scientific">Prochlorococcus marinus subsp. pastoris (strain CCMP1986 / NIES-2087 / MED4)</name>
    <dbReference type="NCBI Taxonomy" id="59919"/>
    <lineage>
        <taxon>Bacteria</taxon>
        <taxon>Bacillati</taxon>
        <taxon>Cyanobacteriota</taxon>
        <taxon>Cyanophyceae</taxon>
        <taxon>Synechococcales</taxon>
        <taxon>Prochlorococcaceae</taxon>
        <taxon>Prochlorococcus</taxon>
    </lineage>
</organism>
<proteinExistence type="inferred from homology"/>
<protein>
    <recommendedName>
        <fullName evidence="1">3-dehydroquinate dehydratase</fullName>
        <shortName evidence="1">3-dehydroquinase</shortName>
        <ecNumber evidence="1">4.2.1.10</ecNumber>
    </recommendedName>
    <alternativeName>
        <fullName evidence="1">Type II DHQase</fullName>
    </alternativeName>
</protein>
<keyword id="KW-0028">Amino-acid biosynthesis</keyword>
<keyword id="KW-0057">Aromatic amino acid biosynthesis</keyword>
<keyword id="KW-0456">Lyase</keyword>
<feature type="chain" id="PRO_0000159917" description="3-dehydroquinate dehydratase">
    <location>
        <begin position="1"/>
        <end position="146"/>
    </location>
</feature>
<feature type="active site" description="Proton acceptor" evidence="1">
    <location>
        <position position="22"/>
    </location>
</feature>
<feature type="active site" description="Proton donor" evidence="1">
    <location>
        <position position="99"/>
    </location>
</feature>
<feature type="binding site" evidence="1">
    <location>
        <position position="73"/>
    </location>
    <ligand>
        <name>substrate</name>
    </ligand>
</feature>
<feature type="binding site" evidence="1">
    <location>
        <position position="79"/>
    </location>
    <ligand>
        <name>substrate</name>
    </ligand>
</feature>
<feature type="binding site" evidence="1">
    <location>
        <position position="86"/>
    </location>
    <ligand>
        <name>substrate</name>
    </ligand>
</feature>
<feature type="binding site" evidence="1">
    <location>
        <begin position="100"/>
        <end position="101"/>
    </location>
    <ligand>
        <name>substrate</name>
    </ligand>
</feature>
<feature type="binding site" evidence="1">
    <location>
        <position position="110"/>
    </location>
    <ligand>
        <name>substrate</name>
    </ligand>
</feature>
<feature type="site" description="Transition state stabilizer" evidence="1">
    <location>
        <position position="17"/>
    </location>
</feature>